<accession>Q5PHE1</accession>
<feature type="chain" id="PRO_0000248928" description="Uncharacterized protein YoaI">
    <location>
        <begin position="1"/>
        <end position="35"/>
    </location>
</feature>
<feature type="transmembrane region" description="Helical" evidence="1">
    <location>
        <begin position="10"/>
        <end position="30"/>
    </location>
</feature>
<dbReference type="EMBL" id="CP000026">
    <property type="protein sequence ID" value="AAV77495.1"/>
    <property type="molecule type" value="Genomic_DNA"/>
</dbReference>
<dbReference type="RefSeq" id="WP_000272239.1">
    <property type="nucleotide sequence ID" value="NC_006511.1"/>
</dbReference>
<dbReference type="SMR" id="Q5PHE1"/>
<dbReference type="KEGG" id="spt:SPA1563"/>
<dbReference type="HOGENOM" id="CLU_216793_0_0_6"/>
<dbReference type="Proteomes" id="UP000008185">
    <property type="component" value="Chromosome"/>
</dbReference>
<dbReference type="GO" id="GO:0016020">
    <property type="term" value="C:membrane"/>
    <property type="evidence" value="ECO:0007669"/>
    <property type="project" value="UniProtKB-SubCell"/>
</dbReference>
<dbReference type="InterPro" id="IPR048191">
    <property type="entry name" value="YoaI-like"/>
</dbReference>
<dbReference type="NCBIfam" id="NF041475">
    <property type="entry name" value="membrane_YoaI"/>
    <property type="match status" value="1"/>
</dbReference>
<gene>
    <name type="primary">yoaI</name>
    <name type="ordered locus">SPA1563</name>
</gene>
<sequence>MYDPPFLEALMITASFFAIFIIIVVSVLLLEGEGD</sequence>
<comment type="subcellular location">
    <subcellularLocation>
        <location evidence="2">Membrane</location>
        <topology evidence="2">Single-pass membrane protein</topology>
    </subcellularLocation>
</comment>
<evidence type="ECO:0000255" key="1"/>
<evidence type="ECO:0000305" key="2"/>
<name>YOAI_SALPA</name>
<organism>
    <name type="scientific">Salmonella paratyphi A (strain ATCC 9150 / SARB42)</name>
    <dbReference type="NCBI Taxonomy" id="295319"/>
    <lineage>
        <taxon>Bacteria</taxon>
        <taxon>Pseudomonadati</taxon>
        <taxon>Pseudomonadota</taxon>
        <taxon>Gammaproteobacteria</taxon>
        <taxon>Enterobacterales</taxon>
        <taxon>Enterobacteriaceae</taxon>
        <taxon>Salmonella</taxon>
    </lineage>
</organism>
<reference key="1">
    <citation type="journal article" date="2004" name="Nat. Genet.">
        <title>Comparison of genome degradation in Paratyphi A and Typhi, human-restricted serovars of Salmonella enterica that cause typhoid.</title>
        <authorList>
            <person name="McClelland M."/>
            <person name="Sanderson K.E."/>
            <person name="Clifton S.W."/>
            <person name="Latreille P."/>
            <person name="Porwollik S."/>
            <person name="Sabo A."/>
            <person name="Meyer R."/>
            <person name="Bieri T."/>
            <person name="Ozersky P."/>
            <person name="McLellan M."/>
            <person name="Harkins C.R."/>
            <person name="Wang C."/>
            <person name="Nguyen C."/>
            <person name="Berghoff A."/>
            <person name="Elliott G."/>
            <person name="Kohlberg S."/>
            <person name="Strong C."/>
            <person name="Du F."/>
            <person name="Carter J."/>
            <person name="Kremizki C."/>
            <person name="Layman D."/>
            <person name="Leonard S."/>
            <person name="Sun H."/>
            <person name="Fulton L."/>
            <person name="Nash W."/>
            <person name="Miner T."/>
            <person name="Minx P."/>
            <person name="Delehaunty K."/>
            <person name="Fronick C."/>
            <person name="Magrini V."/>
            <person name="Nhan M."/>
            <person name="Warren W."/>
            <person name="Florea L."/>
            <person name="Spieth J."/>
            <person name="Wilson R.K."/>
        </authorList>
    </citation>
    <scope>NUCLEOTIDE SEQUENCE [LARGE SCALE GENOMIC DNA]</scope>
    <source>
        <strain>ATCC 9150 / SARB42</strain>
    </source>
</reference>
<keyword id="KW-0472">Membrane</keyword>
<keyword id="KW-0812">Transmembrane</keyword>
<keyword id="KW-1133">Transmembrane helix</keyword>
<proteinExistence type="predicted"/>
<protein>
    <recommendedName>
        <fullName>Uncharacterized protein YoaI</fullName>
    </recommendedName>
</protein>